<dbReference type="EMBL" id="CP000046">
    <property type="protein sequence ID" value="AAW38905.1"/>
    <property type="status" value="ALT_INIT"/>
    <property type="molecule type" value="Genomic_DNA"/>
</dbReference>
<dbReference type="RefSeq" id="WP_001261460.1">
    <property type="nucleotide sequence ID" value="NZ_JBGOFO010000001.1"/>
</dbReference>
<dbReference type="SMR" id="Q5HIS9"/>
<dbReference type="GeneID" id="98344691"/>
<dbReference type="KEGG" id="sac:SACOL0437"/>
<dbReference type="HOGENOM" id="CLU_113441_5_3_9"/>
<dbReference type="Proteomes" id="UP000000530">
    <property type="component" value="Chromosome"/>
</dbReference>
<dbReference type="GO" id="GO:0005737">
    <property type="term" value="C:cytoplasm"/>
    <property type="evidence" value="ECO:0007669"/>
    <property type="project" value="UniProtKB-ARBA"/>
</dbReference>
<dbReference type="GO" id="GO:1990904">
    <property type="term" value="C:ribonucleoprotein complex"/>
    <property type="evidence" value="ECO:0007669"/>
    <property type="project" value="UniProtKB-KW"/>
</dbReference>
<dbReference type="GO" id="GO:0005840">
    <property type="term" value="C:ribosome"/>
    <property type="evidence" value="ECO:0007669"/>
    <property type="project" value="UniProtKB-KW"/>
</dbReference>
<dbReference type="GO" id="GO:0070181">
    <property type="term" value="F:small ribosomal subunit rRNA binding"/>
    <property type="evidence" value="ECO:0007669"/>
    <property type="project" value="TreeGrafter"/>
</dbReference>
<dbReference type="GO" id="GO:0003735">
    <property type="term" value="F:structural constituent of ribosome"/>
    <property type="evidence" value="ECO:0007669"/>
    <property type="project" value="InterPro"/>
</dbReference>
<dbReference type="GO" id="GO:0006412">
    <property type="term" value="P:translation"/>
    <property type="evidence" value="ECO:0007669"/>
    <property type="project" value="UniProtKB-UniRule"/>
</dbReference>
<dbReference type="CDD" id="cd00473">
    <property type="entry name" value="bS6"/>
    <property type="match status" value="1"/>
</dbReference>
<dbReference type="FunFam" id="3.30.70.60:FF:000002">
    <property type="entry name" value="30S ribosomal protein S6"/>
    <property type="match status" value="1"/>
</dbReference>
<dbReference type="Gene3D" id="3.30.70.60">
    <property type="match status" value="1"/>
</dbReference>
<dbReference type="HAMAP" id="MF_00360">
    <property type="entry name" value="Ribosomal_bS6"/>
    <property type="match status" value="1"/>
</dbReference>
<dbReference type="InterPro" id="IPR000529">
    <property type="entry name" value="Ribosomal_bS6"/>
</dbReference>
<dbReference type="InterPro" id="IPR020815">
    <property type="entry name" value="Ribosomal_bS6_CS"/>
</dbReference>
<dbReference type="InterPro" id="IPR035980">
    <property type="entry name" value="Ribosomal_bS6_sf"/>
</dbReference>
<dbReference type="InterPro" id="IPR020814">
    <property type="entry name" value="Ribosomal_S6_plastid/chlpt"/>
</dbReference>
<dbReference type="InterPro" id="IPR014717">
    <property type="entry name" value="Transl_elong_EF1B/ribsomal_bS6"/>
</dbReference>
<dbReference type="NCBIfam" id="TIGR00166">
    <property type="entry name" value="S6"/>
    <property type="match status" value="1"/>
</dbReference>
<dbReference type="PANTHER" id="PTHR21011">
    <property type="entry name" value="MITOCHONDRIAL 28S RIBOSOMAL PROTEIN S6"/>
    <property type="match status" value="1"/>
</dbReference>
<dbReference type="PANTHER" id="PTHR21011:SF1">
    <property type="entry name" value="SMALL RIBOSOMAL SUBUNIT PROTEIN BS6M"/>
    <property type="match status" value="1"/>
</dbReference>
<dbReference type="Pfam" id="PF01250">
    <property type="entry name" value="Ribosomal_S6"/>
    <property type="match status" value="1"/>
</dbReference>
<dbReference type="SUPFAM" id="SSF54995">
    <property type="entry name" value="Ribosomal protein S6"/>
    <property type="match status" value="1"/>
</dbReference>
<dbReference type="PROSITE" id="PS01048">
    <property type="entry name" value="RIBOSOMAL_S6"/>
    <property type="match status" value="1"/>
</dbReference>
<evidence type="ECO:0000255" key="1">
    <source>
        <dbReference type="HAMAP-Rule" id="MF_00360"/>
    </source>
</evidence>
<evidence type="ECO:0000305" key="2"/>
<accession>Q5HIS9</accession>
<organism>
    <name type="scientific">Staphylococcus aureus (strain COL)</name>
    <dbReference type="NCBI Taxonomy" id="93062"/>
    <lineage>
        <taxon>Bacteria</taxon>
        <taxon>Bacillati</taxon>
        <taxon>Bacillota</taxon>
        <taxon>Bacilli</taxon>
        <taxon>Bacillales</taxon>
        <taxon>Staphylococcaceae</taxon>
        <taxon>Staphylococcus</taxon>
    </lineage>
</organism>
<proteinExistence type="inferred from homology"/>
<protein>
    <recommendedName>
        <fullName evidence="1">Small ribosomal subunit protein bS6</fullName>
    </recommendedName>
    <alternativeName>
        <fullName evidence="2">30S ribosomal protein S6</fullName>
    </alternativeName>
</protein>
<sequence>MRTYEVMYIVRPNIEEDAKKALVERFNGILATEGAEVLEAKDWGKRRLAYEINDFKDGFYNIVRVKSDNNKATDEFQRLAKISDDIIRYMVIREDEDK</sequence>
<name>RS6_STAAC</name>
<feature type="chain" id="PRO_0000176835" description="Small ribosomal subunit protein bS6">
    <location>
        <begin position="1"/>
        <end position="98"/>
    </location>
</feature>
<reference key="1">
    <citation type="journal article" date="2005" name="J. Bacteriol.">
        <title>Insights on evolution of virulence and resistance from the complete genome analysis of an early methicillin-resistant Staphylococcus aureus strain and a biofilm-producing methicillin-resistant Staphylococcus epidermidis strain.</title>
        <authorList>
            <person name="Gill S.R."/>
            <person name="Fouts D.E."/>
            <person name="Archer G.L."/>
            <person name="Mongodin E.F."/>
            <person name="DeBoy R.T."/>
            <person name="Ravel J."/>
            <person name="Paulsen I.T."/>
            <person name="Kolonay J.F."/>
            <person name="Brinkac L.M."/>
            <person name="Beanan M.J."/>
            <person name="Dodson R.J."/>
            <person name="Daugherty S.C."/>
            <person name="Madupu R."/>
            <person name="Angiuoli S.V."/>
            <person name="Durkin A.S."/>
            <person name="Haft D.H."/>
            <person name="Vamathevan J.J."/>
            <person name="Khouri H."/>
            <person name="Utterback T.R."/>
            <person name="Lee C."/>
            <person name="Dimitrov G."/>
            <person name="Jiang L."/>
            <person name="Qin H."/>
            <person name="Weidman J."/>
            <person name="Tran K."/>
            <person name="Kang K.H."/>
            <person name="Hance I.R."/>
            <person name="Nelson K.E."/>
            <person name="Fraser C.M."/>
        </authorList>
    </citation>
    <scope>NUCLEOTIDE SEQUENCE [LARGE SCALE GENOMIC DNA]</scope>
    <source>
        <strain>COL</strain>
    </source>
</reference>
<comment type="function">
    <text evidence="1">Binds together with bS18 to 16S ribosomal RNA.</text>
</comment>
<comment type="similarity">
    <text evidence="1">Belongs to the bacterial ribosomal protein bS6 family.</text>
</comment>
<comment type="sequence caution" evidence="2">
    <conflict type="erroneous initiation">
        <sequence resource="EMBL-CDS" id="AAW38905"/>
    </conflict>
</comment>
<gene>
    <name evidence="1" type="primary">rpsF</name>
    <name type="ordered locus">SACOL0437</name>
</gene>
<keyword id="KW-0687">Ribonucleoprotein</keyword>
<keyword id="KW-0689">Ribosomal protein</keyword>
<keyword id="KW-0694">RNA-binding</keyword>
<keyword id="KW-0699">rRNA-binding</keyword>